<evidence type="ECO:0000255" key="1">
    <source>
        <dbReference type="HAMAP-Rule" id="MF_00101"/>
    </source>
</evidence>
<gene>
    <name evidence="1" type="primary">acpS</name>
    <name type="ordered locus">HPAG1_0793</name>
</gene>
<keyword id="KW-0963">Cytoplasm</keyword>
<keyword id="KW-0275">Fatty acid biosynthesis</keyword>
<keyword id="KW-0276">Fatty acid metabolism</keyword>
<keyword id="KW-0444">Lipid biosynthesis</keyword>
<keyword id="KW-0443">Lipid metabolism</keyword>
<keyword id="KW-0460">Magnesium</keyword>
<keyword id="KW-0479">Metal-binding</keyword>
<keyword id="KW-0808">Transferase</keyword>
<reference key="1">
    <citation type="journal article" date="2006" name="Proc. Natl. Acad. Sci. U.S.A.">
        <title>The complete genome sequence of a chronic atrophic gastritis Helicobacter pylori strain: evolution during disease progression.</title>
        <authorList>
            <person name="Oh J.D."/>
            <person name="Kling-Baeckhed H."/>
            <person name="Giannakis M."/>
            <person name="Xu J."/>
            <person name="Fulton R.S."/>
            <person name="Fulton L.A."/>
            <person name="Cordum H.S."/>
            <person name="Wang C."/>
            <person name="Elliott G."/>
            <person name="Edwards J."/>
            <person name="Mardis E.R."/>
            <person name="Engstrand L.G."/>
            <person name="Gordon J.I."/>
        </authorList>
    </citation>
    <scope>NUCLEOTIDE SEQUENCE [LARGE SCALE GENOMIC DNA]</scope>
    <source>
        <strain>HPAG1</strain>
    </source>
</reference>
<comment type="function">
    <text evidence="1">Transfers the 4'-phosphopantetheine moiety from coenzyme A to a Ser of acyl-carrier-protein.</text>
</comment>
<comment type="catalytic activity">
    <reaction evidence="1">
        <text>apo-[ACP] + CoA = holo-[ACP] + adenosine 3',5'-bisphosphate + H(+)</text>
        <dbReference type="Rhea" id="RHEA:12068"/>
        <dbReference type="Rhea" id="RHEA-COMP:9685"/>
        <dbReference type="Rhea" id="RHEA-COMP:9690"/>
        <dbReference type="ChEBI" id="CHEBI:15378"/>
        <dbReference type="ChEBI" id="CHEBI:29999"/>
        <dbReference type="ChEBI" id="CHEBI:57287"/>
        <dbReference type="ChEBI" id="CHEBI:58343"/>
        <dbReference type="ChEBI" id="CHEBI:64479"/>
        <dbReference type="EC" id="2.7.8.7"/>
    </reaction>
</comment>
<comment type="cofactor">
    <cofactor evidence="1">
        <name>Mg(2+)</name>
        <dbReference type="ChEBI" id="CHEBI:18420"/>
    </cofactor>
</comment>
<comment type="subcellular location">
    <subcellularLocation>
        <location evidence="1">Cytoplasm</location>
    </subcellularLocation>
</comment>
<comment type="similarity">
    <text evidence="1">Belongs to the P-Pant transferase superfamily. AcpS family.</text>
</comment>
<proteinExistence type="inferred from homology"/>
<feature type="chain" id="PRO_1000008432" description="Holo-[acyl-carrier-protein] synthase">
    <location>
        <begin position="1"/>
        <end position="119"/>
    </location>
</feature>
<feature type="binding site" evidence="1">
    <location>
        <position position="5"/>
    </location>
    <ligand>
        <name>Mg(2+)</name>
        <dbReference type="ChEBI" id="CHEBI:18420"/>
    </ligand>
</feature>
<feature type="binding site" evidence="1">
    <location>
        <position position="51"/>
    </location>
    <ligand>
        <name>Mg(2+)</name>
        <dbReference type="ChEBI" id="CHEBI:18420"/>
    </ligand>
</feature>
<sequence>MIGIDIVSIARVEKCVKRFKMRFLERFLSPSEIVLCKDKSSSIAGFFALKEACSKALQVGIGKELSFLDIKISKSPKNAPLITLSKEKMDYFNIQSLSASISHDAGFAIAVVMVSSLNR</sequence>
<accession>Q1CT62</accession>
<dbReference type="EC" id="2.7.8.7" evidence="1"/>
<dbReference type="EMBL" id="CP000241">
    <property type="protein sequence ID" value="ABF84860.1"/>
    <property type="molecule type" value="Genomic_DNA"/>
</dbReference>
<dbReference type="RefSeq" id="WP_000579213.1">
    <property type="nucleotide sequence ID" value="NC_008086.1"/>
</dbReference>
<dbReference type="SMR" id="Q1CT62"/>
<dbReference type="KEGG" id="hpa:HPAG1_0793"/>
<dbReference type="HOGENOM" id="CLU_089696_0_2_7"/>
<dbReference type="GO" id="GO:0005737">
    <property type="term" value="C:cytoplasm"/>
    <property type="evidence" value="ECO:0007669"/>
    <property type="project" value="UniProtKB-SubCell"/>
</dbReference>
<dbReference type="GO" id="GO:0008897">
    <property type="term" value="F:holo-[acyl-carrier-protein] synthase activity"/>
    <property type="evidence" value="ECO:0007669"/>
    <property type="project" value="UniProtKB-UniRule"/>
</dbReference>
<dbReference type="GO" id="GO:0000287">
    <property type="term" value="F:magnesium ion binding"/>
    <property type="evidence" value="ECO:0007669"/>
    <property type="project" value="UniProtKB-UniRule"/>
</dbReference>
<dbReference type="GO" id="GO:0006633">
    <property type="term" value="P:fatty acid biosynthetic process"/>
    <property type="evidence" value="ECO:0007669"/>
    <property type="project" value="UniProtKB-UniRule"/>
</dbReference>
<dbReference type="Gene3D" id="3.90.470.20">
    <property type="entry name" value="4'-phosphopantetheinyl transferase domain"/>
    <property type="match status" value="1"/>
</dbReference>
<dbReference type="HAMAP" id="MF_00101">
    <property type="entry name" value="AcpS"/>
    <property type="match status" value="1"/>
</dbReference>
<dbReference type="InterPro" id="IPR008278">
    <property type="entry name" value="4-PPantetheinyl_Trfase_dom"/>
</dbReference>
<dbReference type="InterPro" id="IPR037143">
    <property type="entry name" value="4-PPantetheinyl_Trfase_dom_sf"/>
</dbReference>
<dbReference type="InterPro" id="IPR002582">
    <property type="entry name" value="ACPS"/>
</dbReference>
<dbReference type="InterPro" id="IPR004568">
    <property type="entry name" value="Ppantetheine-prot_Trfase_dom"/>
</dbReference>
<dbReference type="NCBIfam" id="TIGR00516">
    <property type="entry name" value="acpS"/>
    <property type="match status" value="1"/>
</dbReference>
<dbReference type="NCBIfam" id="TIGR00556">
    <property type="entry name" value="pantethn_trn"/>
    <property type="match status" value="1"/>
</dbReference>
<dbReference type="Pfam" id="PF01648">
    <property type="entry name" value="ACPS"/>
    <property type="match status" value="1"/>
</dbReference>
<dbReference type="SUPFAM" id="SSF56214">
    <property type="entry name" value="4'-phosphopantetheinyl transferase"/>
    <property type="match status" value="1"/>
</dbReference>
<name>ACPS_HELPH</name>
<protein>
    <recommendedName>
        <fullName evidence="1">Holo-[acyl-carrier-protein] synthase</fullName>
        <shortName evidence="1">Holo-ACP synthase</shortName>
        <ecNumber evidence="1">2.7.8.7</ecNumber>
    </recommendedName>
    <alternativeName>
        <fullName evidence="1">4'-phosphopantetheinyl transferase AcpS</fullName>
    </alternativeName>
</protein>
<organism>
    <name type="scientific">Helicobacter pylori (strain HPAG1)</name>
    <dbReference type="NCBI Taxonomy" id="357544"/>
    <lineage>
        <taxon>Bacteria</taxon>
        <taxon>Pseudomonadati</taxon>
        <taxon>Campylobacterota</taxon>
        <taxon>Epsilonproteobacteria</taxon>
        <taxon>Campylobacterales</taxon>
        <taxon>Helicobacteraceae</taxon>
        <taxon>Helicobacter</taxon>
    </lineage>
</organism>